<comment type="function">
    <text evidence="1">Could be a mediator in iron transactions between iron acquisition and iron-requiring processes, such as synthesis and/or repair of Fe-S clusters in biosynthetic enzymes.</text>
</comment>
<comment type="similarity">
    <text evidence="1">Belongs to the Fe(2+)-trafficking protein family.</text>
</comment>
<sequence length="90" mass="10608">MSRTVFCQRLKKEGPGLDFQLYPGELGKRIFDNISKEAWTEWQKKQVMLINEKKLNMMNLEHRQLLEKEMVNYLFEAGEVAIDGYTPPSK</sequence>
<dbReference type="EMBL" id="CP000462">
    <property type="protein sequence ID" value="ABK37952.1"/>
    <property type="molecule type" value="Genomic_DNA"/>
</dbReference>
<dbReference type="RefSeq" id="WP_005305420.1">
    <property type="nucleotide sequence ID" value="NC_008570.1"/>
</dbReference>
<dbReference type="RefSeq" id="YP_858236.1">
    <property type="nucleotide sequence ID" value="NC_008570.1"/>
</dbReference>
<dbReference type="SMR" id="A0KPN5"/>
<dbReference type="STRING" id="380703.AHA_3788"/>
<dbReference type="EnsemblBacteria" id="ABK37952">
    <property type="protein sequence ID" value="ABK37952"/>
    <property type="gene ID" value="AHA_3788"/>
</dbReference>
<dbReference type="KEGG" id="aha:AHA_3788"/>
<dbReference type="PATRIC" id="fig|380703.7.peg.3763"/>
<dbReference type="eggNOG" id="COG2924">
    <property type="taxonomic scope" value="Bacteria"/>
</dbReference>
<dbReference type="HOGENOM" id="CLU_170994_0_0_6"/>
<dbReference type="OrthoDB" id="9804318at2"/>
<dbReference type="PRO" id="PR:A0KPN5"/>
<dbReference type="Proteomes" id="UP000000756">
    <property type="component" value="Chromosome"/>
</dbReference>
<dbReference type="GO" id="GO:0005829">
    <property type="term" value="C:cytosol"/>
    <property type="evidence" value="ECO:0007669"/>
    <property type="project" value="TreeGrafter"/>
</dbReference>
<dbReference type="GO" id="GO:0005506">
    <property type="term" value="F:iron ion binding"/>
    <property type="evidence" value="ECO:0007669"/>
    <property type="project" value="UniProtKB-UniRule"/>
</dbReference>
<dbReference type="GO" id="GO:0034599">
    <property type="term" value="P:cellular response to oxidative stress"/>
    <property type="evidence" value="ECO:0007669"/>
    <property type="project" value="TreeGrafter"/>
</dbReference>
<dbReference type="FunFam" id="1.10.3880.10:FF:000001">
    <property type="entry name" value="Probable Fe(2+)-trafficking protein"/>
    <property type="match status" value="1"/>
</dbReference>
<dbReference type="Gene3D" id="1.10.3880.10">
    <property type="entry name" value="Fe(II) trafficking protein YggX"/>
    <property type="match status" value="1"/>
</dbReference>
<dbReference type="HAMAP" id="MF_00686">
    <property type="entry name" value="Fe_traffic_YggX"/>
    <property type="match status" value="1"/>
</dbReference>
<dbReference type="InterPro" id="IPR007457">
    <property type="entry name" value="Fe_traffick_prot_YggX"/>
</dbReference>
<dbReference type="InterPro" id="IPR036766">
    <property type="entry name" value="Fe_traffick_prot_YggX_sf"/>
</dbReference>
<dbReference type="NCBIfam" id="NF003817">
    <property type="entry name" value="PRK05408.1"/>
    <property type="match status" value="1"/>
</dbReference>
<dbReference type="PANTHER" id="PTHR36965">
    <property type="entry name" value="FE(2+)-TRAFFICKING PROTEIN-RELATED"/>
    <property type="match status" value="1"/>
</dbReference>
<dbReference type="PANTHER" id="PTHR36965:SF1">
    <property type="entry name" value="FE(2+)-TRAFFICKING PROTEIN-RELATED"/>
    <property type="match status" value="1"/>
</dbReference>
<dbReference type="Pfam" id="PF04362">
    <property type="entry name" value="Iron_traffic"/>
    <property type="match status" value="1"/>
</dbReference>
<dbReference type="PIRSF" id="PIRSF029827">
    <property type="entry name" value="Fe_traffic_YggX"/>
    <property type="match status" value="1"/>
</dbReference>
<dbReference type="SUPFAM" id="SSF111148">
    <property type="entry name" value="YggX-like"/>
    <property type="match status" value="1"/>
</dbReference>
<protein>
    <recommendedName>
        <fullName evidence="1">Probable Fe(2+)-trafficking protein</fullName>
    </recommendedName>
</protein>
<evidence type="ECO:0000255" key="1">
    <source>
        <dbReference type="HAMAP-Rule" id="MF_00686"/>
    </source>
</evidence>
<name>FETP_AERHH</name>
<feature type="chain" id="PRO_1000045012" description="Probable Fe(2+)-trafficking protein">
    <location>
        <begin position="1"/>
        <end position="90"/>
    </location>
</feature>
<reference key="1">
    <citation type="journal article" date="2006" name="J. Bacteriol.">
        <title>Genome sequence of Aeromonas hydrophila ATCC 7966T: jack of all trades.</title>
        <authorList>
            <person name="Seshadri R."/>
            <person name="Joseph S.W."/>
            <person name="Chopra A.K."/>
            <person name="Sha J."/>
            <person name="Shaw J."/>
            <person name="Graf J."/>
            <person name="Haft D.H."/>
            <person name="Wu M."/>
            <person name="Ren Q."/>
            <person name="Rosovitz M.J."/>
            <person name="Madupu R."/>
            <person name="Tallon L."/>
            <person name="Kim M."/>
            <person name="Jin S."/>
            <person name="Vuong H."/>
            <person name="Stine O.C."/>
            <person name="Ali A."/>
            <person name="Horneman A.J."/>
            <person name="Heidelberg J.F."/>
        </authorList>
    </citation>
    <scope>NUCLEOTIDE SEQUENCE [LARGE SCALE GENOMIC DNA]</scope>
    <source>
        <strain>ATCC 7966 / DSM 30187 / BCRC 13018 / CCUG 14551 / JCM 1027 / KCTC 2358 / NCIMB 9240 / NCTC 8049</strain>
    </source>
</reference>
<accession>A0KPN5</accession>
<keyword id="KW-0408">Iron</keyword>
<keyword id="KW-1185">Reference proteome</keyword>
<proteinExistence type="inferred from homology"/>
<organism>
    <name type="scientific">Aeromonas hydrophila subsp. hydrophila (strain ATCC 7966 / DSM 30187 / BCRC 13018 / CCUG 14551 / JCM 1027 / KCTC 2358 / NCIMB 9240 / NCTC 8049)</name>
    <dbReference type="NCBI Taxonomy" id="380703"/>
    <lineage>
        <taxon>Bacteria</taxon>
        <taxon>Pseudomonadati</taxon>
        <taxon>Pseudomonadota</taxon>
        <taxon>Gammaproteobacteria</taxon>
        <taxon>Aeromonadales</taxon>
        <taxon>Aeromonadaceae</taxon>
        <taxon>Aeromonas</taxon>
    </lineage>
</organism>
<gene>
    <name type="ordered locus">AHA_3788</name>
</gene>